<gene>
    <name evidence="7" type="primary">PIF7</name>
    <name type="ORF">Tb927.8.700</name>
</gene>
<reference key="1">
    <citation type="journal article" date="2005" name="Science">
        <title>The genome of the African trypanosome Trypanosoma brucei.</title>
        <authorList>
            <person name="Berriman M."/>
            <person name="Ghedin E."/>
            <person name="Hertz-Fowler C."/>
            <person name="Blandin G."/>
            <person name="Renauld H."/>
            <person name="Bartholomeu D.C."/>
            <person name="Lennard N.J."/>
            <person name="Caler E."/>
            <person name="Hamlin N.E."/>
            <person name="Haas B."/>
            <person name="Bohme U."/>
            <person name="Hannick L."/>
            <person name="Aslett M.A."/>
            <person name="Shallom J."/>
            <person name="Marcello L."/>
            <person name="Hou L."/>
            <person name="Wickstead B."/>
            <person name="Alsmark U.C.M."/>
            <person name="Arrowsmith C."/>
            <person name="Atkin R.J."/>
            <person name="Barron A.J."/>
            <person name="Bringaud F."/>
            <person name="Brooks K."/>
            <person name="Carrington M."/>
            <person name="Cherevach I."/>
            <person name="Chillingworth T.J."/>
            <person name="Churcher C."/>
            <person name="Clark L.N."/>
            <person name="Corton C.H."/>
            <person name="Cronin A."/>
            <person name="Davies R.M."/>
            <person name="Doggett J."/>
            <person name="Djikeng A."/>
            <person name="Feldblyum T."/>
            <person name="Field M.C."/>
            <person name="Fraser A."/>
            <person name="Goodhead I."/>
            <person name="Hance Z."/>
            <person name="Harper D."/>
            <person name="Harris B.R."/>
            <person name="Hauser H."/>
            <person name="Hostetler J."/>
            <person name="Ivens A."/>
            <person name="Jagels K."/>
            <person name="Johnson D."/>
            <person name="Johnson J."/>
            <person name="Jones K."/>
            <person name="Kerhornou A.X."/>
            <person name="Koo H."/>
            <person name="Larke N."/>
            <person name="Landfear S."/>
            <person name="Larkin C."/>
            <person name="Leech V."/>
            <person name="Line A."/>
            <person name="Lord A."/>
            <person name="Macleod A."/>
            <person name="Mooney P.J."/>
            <person name="Moule S."/>
            <person name="Martin D.M."/>
            <person name="Morgan G.W."/>
            <person name="Mungall K."/>
            <person name="Norbertczak H."/>
            <person name="Ormond D."/>
            <person name="Pai G."/>
            <person name="Peacock C.S."/>
            <person name="Peterson J."/>
            <person name="Quail M.A."/>
            <person name="Rabbinowitsch E."/>
            <person name="Rajandream M.A."/>
            <person name="Reitter C."/>
            <person name="Salzberg S.L."/>
            <person name="Sanders M."/>
            <person name="Schobel S."/>
            <person name="Sharp S."/>
            <person name="Simmonds M."/>
            <person name="Simpson A.J."/>
            <person name="Tallon L."/>
            <person name="Turner C.M."/>
            <person name="Tait A."/>
            <person name="Tivey A.R."/>
            <person name="Van Aken S."/>
            <person name="Walker D."/>
            <person name="Wanless D."/>
            <person name="Wang S."/>
            <person name="White B."/>
            <person name="White O."/>
            <person name="Whitehead S."/>
            <person name="Woodward J."/>
            <person name="Wortman J."/>
            <person name="Adams M.D."/>
            <person name="Embley T.M."/>
            <person name="Gull K."/>
            <person name="Ullu E."/>
            <person name="Barry J.D."/>
            <person name="Fairlamb A.H."/>
            <person name="Opperdoes F."/>
            <person name="Barrell B.G."/>
            <person name="Donelson J.E."/>
            <person name="Hall N."/>
            <person name="Fraser C.M."/>
            <person name="Melville S.E."/>
            <person name="El-Sayed N.M.A."/>
        </authorList>
    </citation>
    <scope>NUCLEOTIDE SEQUENCE [LARGE SCALE GENOMIC DNA]</scope>
    <source>
        <strain evidence="9">927/4 GUTat10.1</strain>
    </source>
</reference>
<reference key="2">
    <citation type="journal article" date="2009" name="Mol. Cell">
        <title>Trypanosomes have six mitochondrial DNA helicases with one controlling kinetoplast maxicircle replication.</title>
        <authorList>
            <person name="Liu B."/>
            <person name="Wang J."/>
            <person name="Yaffe N."/>
            <person name="Lindsay M.E."/>
            <person name="Zhao Z."/>
            <person name="Zick A."/>
            <person name="Shlomai J."/>
            <person name="Englund P.T."/>
        </authorList>
    </citation>
    <scope>SUBCELLULAR LOCATION</scope>
    <scope>DISRUPTION PHENOTYPE</scope>
</reference>
<name>PIF7_TRYB2</name>
<sequence length="992" mass="108863">MWDGPLRSRQNLRTVAKLRSSGCPLTQSAIHPTTTSPSEGETASEILQGQASAGYIEEQQLPATSSQLEMSGDSNAASDNNVVIMTKRQRDDLSQASQAEVLSRLRTEDAQGPAENNGAQSDLALHSCDMEERVDSSKLNLNHVTVNKHSPPASKSAGISQQNDDGGCGASENVDNTTTAASKQRGKLLLDSSSSNCTPKQQAQQAVTQVPEWELSHEQERIFDIVVNHRRSVFLTGGAGTGKSHLLRAIIAALPLSTTFVTATTGLAALNLGGTTLHSFSGCGFVDQHTSTHQMVYRNVLGRKKARANWRKCRVLVVDEVSMLDAWFFDMLEYVARHIRGCRKPFGGIQLVLSGDFLQLPPVNKHSPKQETRLCFEAKSWPRVNPLVCTLSHQFRQKDKEFFSLLNEVRVGALTAPSLGLLSSLSVITTVSFVDEEKLKLKREVGAEAVDIITDSKGRTRRQRQDGFTILRARRSEVDAINTEKFGELDTEIYSYKGAHRGEGHFPSDLPSTVSVRAGCRVMLLANLDLSAGLANGSIGTVESFVSSKLHQTANPSTKDDLQHLADHMMLPVVRFDHKGKQGPGDGGGAAAGRLVVIEPHRWTMRQGDSDVSCSIQIPLQLAYAITIHKSQGMSLSHVNVDFAGIFEEGQAYVALSRCTDVANLVIENFDAQRVNPNIKALAYYRALEFVGTEHREAEKKLIDNGNKMNPWGPYDVEDFEASDDDNGGAVKKEVVENLTYDAENISCMVEQFRQRYMPQYIMFSTLRRRVLSNTEDAARVKGALLVMDTTSLLALTNMTGPTSLYQTIFTERGNMMRVPRVVKEELLFLASTDVKEVSSVTTPTLHSFCSTCSSTPCSTGFSYDFVEVVSCALSIMENAKCDFLLDEQREGEANSLPPVIQEWRSLSPLLMLNSSPDTGEKDAPSVIGFGERSREQHHSTLMFASFLVSRYSGNGAVYVCTETVELAARALAIGLRVCSIAYLCNRARRVN</sequence>
<comment type="function">
    <text evidence="1">DNA-dependent ATPase and 5'-3' DNA helicase required for the maintenance of mitochondrial (kinetoplast) genome stability.</text>
</comment>
<comment type="catalytic activity">
    <reaction evidence="2">
        <text>Couples ATP hydrolysis with the unwinding of duplex DNA at the replication fork by translocating in the 5'-3' direction. This creates two antiparallel DNA single strands (ssDNA). The leading ssDNA polymer is the template for DNA polymerase III holoenzyme which synthesizes a continuous strand.</text>
        <dbReference type="EC" id="5.6.2.3"/>
    </reaction>
</comment>
<comment type="catalytic activity">
    <reaction evidence="2">
        <text>ATP + H2O = ADP + phosphate + H(+)</text>
        <dbReference type="Rhea" id="RHEA:13065"/>
        <dbReference type="ChEBI" id="CHEBI:15377"/>
        <dbReference type="ChEBI" id="CHEBI:15378"/>
        <dbReference type="ChEBI" id="CHEBI:30616"/>
        <dbReference type="ChEBI" id="CHEBI:43474"/>
        <dbReference type="ChEBI" id="CHEBI:456216"/>
        <dbReference type="EC" id="5.6.2.3"/>
    </reaction>
</comment>
<comment type="cofactor">
    <cofactor evidence="2">
        <name>Mg(2+)</name>
        <dbReference type="ChEBI" id="CHEBI:18420"/>
    </cofactor>
</comment>
<comment type="subunit">
    <text evidence="1 3">Monomer.</text>
</comment>
<comment type="subcellular location">
    <subcellularLocation>
        <location evidence="6">Mitochondrion matrix</location>
        <location evidence="6">Kinetoplast</location>
    </subcellularLocation>
    <text evidence="6">Localizes predominantly to the kDNA disk.</text>
</comment>
<comment type="disruption phenotype">
    <text evidence="6">No growth phenotype.</text>
</comment>
<comment type="similarity">
    <text evidence="8">Belongs to the helicase family. PIF1 subfamily.</text>
</comment>
<proteinExistence type="inferred from homology"/>
<accession>Q57YG0</accession>
<accession>D6XMN8</accession>
<protein>
    <recommendedName>
        <fullName evidence="7">ATP-dependent DNA helicase PIF7</fullName>
        <ecNumber evidence="2">5.6.2.3</ecNumber>
    </recommendedName>
    <alternativeName>
        <fullName evidence="8">DNA 5'-3' helicase PIF7</fullName>
    </alternativeName>
    <alternativeName>
        <fullName>DNA repair and recombination helicase PIF7</fullName>
    </alternativeName>
</protein>
<feature type="transit peptide" description="Mitochondrion" evidence="4">
    <location>
        <begin position="1"/>
        <end position="21"/>
    </location>
</feature>
<feature type="chain" id="PRO_0000423753" description="ATP-dependent DNA helicase PIF7">
    <location>
        <begin position="22"/>
        <end position="992"/>
    </location>
</feature>
<feature type="DNA-binding region" evidence="4">
    <location>
        <begin position="651"/>
        <end position="670"/>
    </location>
</feature>
<feature type="region of interest" description="Disordered" evidence="5">
    <location>
        <begin position="20"/>
        <end position="43"/>
    </location>
</feature>
<feature type="region of interest" description="Disordered" evidence="5">
    <location>
        <begin position="145"/>
        <end position="182"/>
    </location>
</feature>
<feature type="region of interest" description="Disordered" evidence="5">
    <location>
        <begin position="190"/>
        <end position="209"/>
    </location>
</feature>
<feature type="compositionally biased region" description="Polar residues" evidence="5">
    <location>
        <begin position="23"/>
        <end position="43"/>
    </location>
</feature>
<feature type="compositionally biased region" description="Polar residues" evidence="5">
    <location>
        <begin position="173"/>
        <end position="182"/>
    </location>
</feature>
<feature type="compositionally biased region" description="Polar residues" evidence="5">
    <location>
        <begin position="191"/>
        <end position="208"/>
    </location>
</feature>
<feature type="binding site" evidence="4">
    <location>
        <begin position="237"/>
        <end position="244"/>
    </location>
    <ligand>
        <name>ATP</name>
        <dbReference type="ChEBI" id="CHEBI:30616"/>
    </ligand>
</feature>
<evidence type="ECO:0000250" key="1"/>
<evidence type="ECO:0000250" key="2">
    <source>
        <dbReference type="UniProtKB" id="Q384Y0"/>
    </source>
</evidence>
<evidence type="ECO:0000250" key="3">
    <source>
        <dbReference type="UniProtKB" id="Q9H611"/>
    </source>
</evidence>
<evidence type="ECO:0000255" key="4"/>
<evidence type="ECO:0000256" key="5">
    <source>
        <dbReference type="SAM" id="MobiDB-lite"/>
    </source>
</evidence>
<evidence type="ECO:0000269" key="6">
    <source>
    </source>
</evidence>
<evidence type="ECO:0000303" key="7">
    <source>
    </source>
</evidence>
<evidence type="ECO:0000305" key="8"/>
<evidence type="ECO:0000312" key="9">
    <source>
        <dbReference type="Proteomes" id="UP000008524"/>
    </source>
</evidence>
<organism>
    <name type="scientific">Trypanosoma brucei brucei (strain 927/4 GUTat10.1)</name>
    <dbReference type="NCBI Taxonomy" id="185431"/>
    <lineage>
        <taxon>Eukaryota</taxon>
        <taxon>Discoba</taxon>
        <taxon>Euglenozoa</taxon>
        <taxon>Kinetoplastea</taxon>
        <taxon>Metakinetoplastina</taxon>
        <taxon>Trypanosomatida</taxon>
        <taxon>Trypanosomatidae</taxon>
        <taxon>Trypanosoma</taxon>
    </lineage>
</organism>
<dbReference type="EC" id="5.6.2.3" evidence="2"/>
<dbReference type="EMBL" id="AC159407">
    <property type="protein sequence ID" value="AAX69358.1"/>
    <property type="molecule type" value="Genomic_DNA"/>
</dbReference>
<dbReference type="EMBL" id="CP000071">
    <property type="protein sequence ID" value="AAZ12841.1"/>
    <property type="molecule type" value="Genomic_DNA"/>
</dbReference>
<dbReference type="RefSeq" id="XP_846907.1">
    <property type="nucleotide sequence ID" value="XM_841814.1"/>
</dbReference>
<dbReference type="SMR" id="Q57YG0"/>
<dbReference type="STRING" id="185431.Q57YG0"/>
<dbReference type="PaxDb" id="5691-AAZ12841"/>
<dbReference type="GeneID" id="3659043"/>
<dbReference type="KEGG" id="tbr:Tb927.8.700"/>
<dbReference type="VEuPathDB" id="TriTrypDB:Tb927.8.700"/>
<dbReference type="eggNOG" id="KOG0987">
    <property type="taxonomic scope" value="Eukaryota"/>
</dbReference>
<dbReference type="InParanoid" id="Q57YG0"/>
<dbReference type="OMA" id="MRVPLCV"/>
<dbReference type="OrthoDB" id="272985at2759"/>
<dbReference type="Proteomes" id="UP000008524">
    <property type="component" value="Chromosome 8"/>
</dbReference>
<dbReference type="GO" id="GO:0020023">
    <property type="term" value="C:kinetoplast"/>
    <property type="evidence" value="ECO:0007669"/>
    <property type="project" value="UniProtKB-SubCell"/>
</dbReference>
<dbReference type="GO" id="GO:0005739">
    <property type="term" value="C:mitochondrion"/>
    <property type="evidence" value="ECO:0000255"/>
    <property type="project" value="GeneDB"/>
</dbReference>
<dbReference type="GO" id="GO:0031981">
    <property type="term" value="C:nuclear lumen"/>
    <property type="evidence" value="ECO:0000318"/>
    <property type="project" value="GO_Central"/>
</dbReference>
<dbReference type="GO" id="GO:0043139">
    <property type="term" value="F:5'-3' DNA helicase activity"/>
    <property type="evidence" value="ECO:0000318"/>
    <property type="project" value="GO_Central"/>
</dbReference>
<dbReference type="GO" id="GO:0005524">
    <property type="term" value="F:ATP binding"/>
    <property type="evidence" value="ECO:0007669"/>
    <property type="project" value="UniProtKB-KW"/>
</dbReference>
<dbReference type="GO" id="GO:0016887">
    <property type="term" value="F:ATP hydrolysis activity"/>
    <property type="evidence" value="ECO:0007669"/>
    <property type="project" value="InterPro"/>
</dbReference>
<dbReference type="GO" id="GO:0003677">
    <property type="term" value="F:DNA binding"/>
    <property type="evidence" value="ECO:0007669"/>
    <property type="project" value="UniProtKB-KW"/>
</dbReference>
<dbReference type="GO" id="GO:0000287">
    <property type="term" value="F:magnesium ion binding"/>
    <property type="evidence" value="ECO:0000305"/>
    <property type="project" value="GeneDB"/>
</dbReference>
<dbReference type="GO" id="GO:0051276">
    <property type="term" value="P:chromosome organization"/>
    <property type="evidence" value="ECO:0000247"/>
    <property type="project" value="GeneDB"/>
</dbReference>
<dbReference type="GO" id="GO:0006310">
    <property type="term" value="P:DNA recombination"/>
    <property type="evidence" value="ECO:0000247"/>
    <property type="project" value="GeneDB"/>
</dbReference>
<dbReference type="GO" id="GO:0006281">
    <property type="term" value="P:DNA repair"/>
    <property type="evidence" value="ECO:0007669"/>
    <property type="project" value="UniProtKB-KW"/>
</dbReference>
<dbReference type="GO" id="GO:0000723">
    <property type="term" value="P:telomere maintenance"/>
    <property type="evidence" value="ECO:0007669"/>
    <property type="project" value="InterPro"/>
</dbReference>
<dbReference type="CDD" id="cd18037">
    <property type="entry name" value="DEXSc_Pif1_like"/>
    <property type="match status" value="1"/>
</dbReference>
<dbReference type="CDD" id="cd18809">
    <property type="entry name" value="SF1_C_RecD"/>
    <property type="match status" value="1"/>
</dbReference>
<dbReference type="FunFam" id="3.40.50.300:FF:002849">
    <property type="entry name" value="ATP-dependent DNA helicase"/>
    <property type="match status" value="1"/>
</dbReference>
<dbReference type="Gene3D" id="3.40.50.300">
    <property type="entry name" value="P-loop containing nucleotide triphosphate hydrolases"/>
    <property type="match status" value="1"/>
</dbReference>
<dbReference type="InterPro" id="IPR003593">
    <property type="entry name" value="AAA+_ATPase"/>
</dbReference>
<dbReference type="InterPro" id="IPR003840">
    <property type="entry name" value="DNA_helicase_dom"/>
</dbReference>
<dbReference type="InterPro" id="IPR010285">
    <property type="entry name" value="DNA_helicase_pif1-like_DEAD"/>
</dbReference>
<dbReference type="InterPro" id="IPR027417">
    <property type="entry name" value="P-loop_NTPase"/>
</dbReference>
<dbReference type="InterPro" id="IPR051055">
    <property type="entry name" value="PIF1_helicase"/>
</dbReference>
<dbReference type="PANTHER" id="PTHR47642">
    <property type="entry name" value="ATP-DEPENDENT DNA HELICASE"/>
    <property type="match status" value="1"/>
</dbReference>
<dbReference type="PANTHER" id="PTHR47642:SF7">
    <property type="entry name" value="ATP-DEPENDENT DNA HELICASE PIF1"/>
    <property type="match status" value="1"/>
</dbReference>
<dbReference type="Pfam" id="PF02689">
    <property type="entry name" value="Herpes_Helicase"/>
    <property type="match status" value="1"/>
</dbReference>
<dbReference type="Pfam" id="PF05970">
    <property type="entry name" value="PIF1"/>
    <property type="match status" value="1"/>
</dbReference>
<dbReference type="SMART" id="SM00382">
    <property type="entry name" value="AAA"/>
    <property type="match status" value="1"/>
</dbReference>
<dbReference type="SUPFAM" id="SSF52540">
    <property type="entry name" value="P-loop containing nucleoside triphosphate hydrolases"/>
    <property type="match status" value="2"/>
</dbReference>
<keyword id="KW-0067">ATP-binding</keyword>
<keyword id="KW-0227">DNA damage</keyword>
<keyword id="KW-0233">DNA recombination</keyword>
<keyword id="KW-0234">DNA repair</keyword>
<keyword id="KW-0238">DNA-binding</keyword>
<keyword id="KW-0347">Helicase</keyword>
<keyword id="KW-0378">Hydrolase</keyword>
<keyword id="KW-0413">Isomerase</keyword>
<keyword id="KW-0419">Kinetoplast</keyword>
<keyword id="KW-0496">Mitochondrion</keyword>
<keyword id="KW-0547">Nucleotide-binding</keyword>
<keyword id="KW-1185">Reference proteome</keyword>
<keyword id="KW-0809">Transit peptide</keyword>